<accession>Q9LSD2</accession>
<accession>F4JEW4</accession>
<feature type="chain" id="PRO_0000429288" description="MATH domain and coiled-coil domain-containing protein At3g27040">
    <location>
        <begin position="1"/>
        <end position="271"/>
    </location>
</feature>
<feature type="domain" description="MATH" evidence="2">
    <location>
        <begin position="7"/>
        <end position="133"/>
    </location>
</feature>
<feature type="coiled-coil region" evidence="1">
    <location>
        <begin position="230"/>
        <end position="271"/>
    </location>
</feature>
<protein>
    <recommendedName>
        <fullName>MATH domain and coiled-coil domain-containing protein At3g27040</fullName>
    </recommendedName>
    <alternativeName>
        <fullName>RTM3-like protein At3g27040</fullName>
    </alternativeName>
</protein>
<dbReference type="EMBL" id="AB026649">
    <property type="protein sequence ID" value="BAB01085.1"/>
    <property type="molecule type" value="Genomic_DNA"/>
</dbReference>
<dbReference type="EMBL" id="CP002686">
    <property type="protein sequence ID" value="AEE77259.2"/>
    <property type="molecule type" value="Genomic_DNA"/>
</dbReference>
<dbReference type="RefSeq" id="NP_001319652.1">
    <property type="nucleotide sequence ID" value="NM_001338851.1"/>
</dbReference>
<dbReference type="SMR" id="Q9LSD2"/>
<dbReference type="FunCoup" id="Q9LSD2">
    <property type="interactions" value="47"/>
</dbReference>
<dbReference type="PaxDb" id="3702-AT3G27040.1"/>
<dbReference type="EnsemblPlants" id="AT3G27040.1">
    <property type="protein sequence ID" value="AT3G27040.1"/>
    <property type="gene ID" value="AT3G27040"/>
</dbReference>
<dbReference type="GeneID" id="822322"/>
<dbReference type="Gramene" id="AT3G27040.1">
    <property type="protein sequence ID" value="AT3G27040.1"/>
    <property type="gene ID" value="AT3G27040"/>
</dbReference>
<dbReference type="KEGG" id="ath:AT3G27040"/>
<dbReference type="Araport" id="AT3G27040"/>
<dbReference type="TAIR" id="AT3G27040"/>
<dbReference type="eggNOG" id="KOG1987">
    <property type="taxonomic scope" value="Eukaryota"/>
</dbReference>
<dbReference type="HOGENOM" id="CLU_026537_0_0_1"/>
<dbReference type="InParanoid" id="Q9LSD2"/>
<dbReference type="OMA" id="GNHQADK"/>
<dbReference type="PhylomeDB" id="Q9LSD2"/>
<dbReference type="PRO" id="PR:Q9LSD2"/>
<dbReference type="Proteomes" id="UP000006548">
    <property type="component" value="Chromosome 3"/>
</dbReference>
<dbReference type="ExpressionAtlas" id="Q9LSD2">
    <property type="expression patterns" value="baseline and differential"/>
</dbReference>
<dbReference type="CDD" id="cd00121">
    <property type="entry name" value="MATH"/>
    <property type="match status" value="1"/>
</dbReference>
<dbReference type="Gene3D" id="2.60.210.10">
    <property type="entry name" value="Apoptosis, Tumor Necrosis Factor Receptor Associated Protein 2, Chain A"/>
    <property type="match status" value="1"/>
</dbReference>
<dbReference type="InterPro" id="IPR050804">
    <property type="entry name" value="MATH-CC_domain_protein"/>
</dbReference>
<dbReference type="InterPro" id="IPR002083">
    <property type="entry name" value="MATH/TRAF_dom"/>
</dbReference>
<dbReference type="InterPro" id="IPR008974">
    <property type="entry name" value="TRAF-like"/>
</dbReference>
<dbReference type="PANTHER" id="PTHR46236:SF21">
    <property type="entry name" value="TRAF-LIKE FAMILY PROTEIN-RELATED"/>
    <property type="match status" value="1"/>
</dbReference>
<dbReference type="PANTHER" id="PTHR46236">
    <property type="entry name" value="TRAF-LIKE SUPERFAMILY PROTEIN"/>
    <property type="match status" value="1"/>
</dbReference>
<dbReference type="Pfam" id="PF22486">
    <property type="entry name" value="MATH_2"/>
    <property type="match status" value="1"/>
</dbReference>
<dbReference type="SMART" id="SM00061">
    <property type="entry name" value="MATH"/>
    <property type="match status" value="1"/>
</dbReference>
<dbReference type="SUPFAM" id="SSF49599">
    <property type="entry name" value="TRAF domain-like"/>
    <property type="match status" value="1"/>
</dbReference>
<dbReference type="PROSITE" id="PS50144">
    <property type="entry name" value="MATH"/>
    <property type="match status" value="1"/>
</dbReference>
<evidence type="ECO:0000255" key="1"/>
<evidence type="ECO:0000255" key="2">
    <source>
        <dbReference type="PROSITE-ProRule" id="PRU00129"/>
    </source>
</evidence>
<keyword id="KW-0175">Coiled coil</keyword>
<keyword id="KW-1185">Reference proteome</keyword>
<name>MCC11_ARATH</name>
<reference key="1">
    <citation type="journal article" date="2000" name="DNA Res.">
        <title>Structural analysis of Arabidopsis thaliana chromosome 3. I. Sequence features of the regions of 4,504,864 bp covered by sixty P1 and TAC clones.</title>
        <authorList>
            <person name="Sato S."/>
            <person name="Nakamura Y."/>
            <person name="Kaneko T."/>
            <person name="Katoh T."/>
            <person name="Asamizu E."/>
            <person name="Tabata S."/>
        </authorList>
    </citation>
    <scope>NUCLEOTIDE SEQUENCE [LARGE SCALE GENOMIC DNA]</scope>
    <source>
        <strain>cv. Columbia</strain>
    </source>
</reference>
<reference key="2">
    <citation type="journal article" date="2017" name="Plant J.">
        <title>Araport11: a complete reannotation of the Arabidopsis thaliana reference genome.</title>
        <authorList>
            <person name="Cheng C.Y."/>
            <person name="Krishnakumar V."/>
            <person name="Chan A.P."/>
            <person name="Thibaud-Nissen F."/>
            <person name="Schobel S."/>
            <person name="Town C.D."/>
        </authorList>
    </citation>
    <scope>GENOME REANNOTATION</scope>
    <source>
        <strain>cv. Columbia</strain>
    </source>
</reference>
<reference key="3">
    <citation type="journal article" date="2010" name="Plant Physiol.">
        <title>RTM3, which controls long-distance movement of potyviruses, is a member of a new plant gene family encoding a meprin and TRAF homology domain-containing protein.</title>
        <authorList>
            <person name="Cosson P."/>
            <person name="Sofer L."/>
            <person name="Le Q.H."/>
            <person name="Leger V."/>
            <person name="Schurdi-Levraud V."/>
            <person name="Whitham S.A."/>
            <person name="Yamamoto M.L."/>
            <person name="Gopalan S."/>
            <person name="Le Gall O."/>
            <person name="Candresse T."/>
            <person name="Carrington J.C."/>
            <person name="Revers F."/>
        </authorList>
    </citation>
    <scope>GENE FAMILY</scope>
</reference>
<gene>
    <name type="ordered locus">At3g27040</name>
    <name type="ORF">MOJ10.11</name>
</gene>
<sequence>MGNHQADKKFTWVIKNYNSLGSGSVYSDTFKAGRCKWRLLAFPKGNNIYDYFFLYICVPNSESLPSGWRRRAKVSFTMVNQIPGGLSQQREAVYWFDEKDTTHGFESMFLLSEIQSSDKGFLVNGEVKIVAEVDVLEVIGELDVPEEPERIDINGFQVPASQVESMNSLFEKYRGFASKIFPKNQHLRKTFLDVVLSMTEILCKFPEELSSGDLAEAYSALRFVTKAGFKLDWLEKKLKETGKSRLQEIEEDLKDLKVKCADMDALLDFLR</sequence>
<organism>
    <name type="scientific">Arabidopsis thaliana</name>
    <name type="common">Mouse-ear cress</name>
    <dbReference type="NCBI Taxonomy" id="3702"/>
    <lineage>
        <taxon>Eukaryota</taxon>
        <taxon>Viridiplantae</taxon>
        <taxon>Streptophyta</taxon>
        <taxon>Embryophyta</taxon>
        <taxon>Tracheophyta</taxon>
        <taxon>Spermatophyta</taxon>
        <taxon>Magnoliopsida</taxon>
        <taxon>eudicotyledons</taxon>
        <taxon>Gunneridae</taxon>
        <taxon>Pentapetalae</taxon>
        <taxon>rosids</taxon>
        <taxon>malvids</taxon>
        <taxon>Brassicales</taxon>
        <taxon>Brassicaceae</taxon>
        <taxon>Camelineae</taxon>
        <taxon>Arabidopsis</taxon>
    </lineage>
</organism>
<proteinExistence type="predicted"/>